<name>NHAA1_CLAM3</name>
<gene>
    <name evidence="1" type="primary">nhaA1</name>
    <name type="ordered locus">CMM_0069</name>
</gene>
<sequence>MISPNPALPTPPHAPTAPGRGARLSRFLSRDTTGGILLLIATVLALVIANSPAADLYERVRGFTFGPEALHLDLSVSAWAADGLLAIFFFVVGLELKQEFVAGSLRDPRVAALPIAAAAGRVIVPAGIFTLINLGAGPEALRGWAIPAATDIAFAVAVVAVVGRRLPPVLRTFLLTLAVVDDLLAITIIAVFYTAGIAFVPLLLASVPLAVFGILVQRGVRAWYVLIPLGVAAWALVHASGIHATIAGVALGLLVPAIATARAGVTHRGTAGREERHALTHFFAERWSPISSGIAVPVFAFFSAGVTVGGLEGLTSSLTDSVAVGIIVALVIGKAAGITGASLLVARLPGIRLDPTLRWPDVLGLSFVAGIGFTVSLLVGELAYGTGSAQDDAVKVGVLIGLLTSAVIGGTLLALRGRWHAAASLHEPVPAAVR</sequence>
<feature type="chain" id="PRO_0000334267" description="Na(+)/H(+) antiporter NhaA 1">
    <location>
        <begin position="1"/>
        <end position="434"/>
    </location>
</feature>
<feature type="transmembrane region" description="Helical" evidence="1">
    <location>
        <begin position="34"/>
        <end position="54"/>
    </location>
</feature>
<feature type="transmembrane region" description="Helical" evidence="1">
    <location>
        <begin position="74"/>
        <end position="94"/>
    </location>
</feature>
<feature type="transmembrane region" description="Helical" evidence="1">
    <location>
        <begin position="112"/>
        <end position="132"/>
    </location>
</feature>
<feature type="transmembrane region" description="Helical" evidence="1">
    <location>
        <begin position="143"/>
        <end position="163"/>
    </location>
</feature>
<feature type="transmembrane region" description="Helical" evidence="1">
    <location>
        <begin position="173"/>
        <end position="193"/>
    </location>
</feature>
<feature type="transmembrane region" description="Helical" evidence="1">
    <location>
        <begin position="196"/>
        <end position="216"/>
    </location>
</feature>
<feature type="transmembrane region" description="Helical" evidence="1">
    <location>
        <begin position="222"/>
        <end position="242"/>
    </location>
</feature>
<feature type="transmembrane region" description="Helical" evidence="1">
    <location>
        <begin position="245"/>
        <end position="265"/>
    </location>
</feature>
<feature type="transmembrane region" description="Helical" evidence="1">
    <location>
        <begin position="294"/>
        <end position="314"/>
    </location>
</feature>
<feature type="transmembrane region" description="Helical" evidence="1">
    <location>
        <begin position="326"/>
        <end position="346"/>
    </location>
</feature>
<feature type="transmembrane region" description="Helical" evidence="1">
    <location>
        <begin position="362"/>
        <end position="382"/>
    </location>
</feature>
<feature type="transmembrane region" description="Helical" evidence="1">
    <location>
        <begin position="393"/>
        <end position="413"/>
    </location>
</feature>
<feature type="region of interest" description="Disordered" evidence="2">
    <location>
        <begin position="1"/>
        <end position="21"/>
    </location>
</feature>
<feature type="compositionally biased region" description="Pro residues" evidence="2">
    <location>
        <begin position="1"/>
        <end position="15"/>
    </location>
</feature>
<reference key="1">
    <citation type="journal article" date="2008" name="J. Bacteriol.">
        <title>The genome sequence of the tomato-pathogenic actinomycete Clavibacter michiganensis subsp. michiganensis NCPPB382 reveals a large island involved in pathogenicity.</title>
        <authorList>
            <person name="Gartemann K.-H."/>
            <person name="Abt B."/>
            <person name="Bekel T."/>
            <person name="Burger A."/>
            <person name="Engemann J."/>
            <person name="Fluegel M."/>
            <person name="Gaigalat L."/>
            <person name="Goesmann A."/>
            <person name="Graefen I."/>
            <person name="Kalinowski J."/>
            <person name="Kaup O."/>
            <person name="Kirchner O."/>
            <person name="Krause L."/>
            <person name="Linke B."/>
            <person name="McHardy A."/>
            <person name="Meyer F."/>
            <person name="Pohle S."/>
            <person name="Rueckert C."/>
            <person name="Schneiker S."/>
            <person name="Zellermann E.-M."/>
            <person name="Puehler A."/>
            <person name="Eichenlaub R."/>
            <person name="Kaiser O."/>
            <person name="Bartels D."/>
        </authorList>
    </citation>
    <scope>NUCLEOTIDE SEQUENCE [LARGE SCALE GENOMIC DNA]</scope>
    <source>
        <strain>NCPPB 382</strain>
    </source>
</reference>
<proteinExistence type="inferred from homology"/>
<accession>A5CM04</accession>
<dbReference type="EMBL" id="AM711867">
    <property type="protein sequence ID" value="CAN00086.1"/>
    <property type="molecule type" value="Genomic_DNA"/>
</dbReference>
<dbReference type="RefSeq" id="WP_011931288.1">
    <property type="nucleotide sequence ID" value="NC_009480.1"/>
</dbReference>
<dbReference type="SMR" id="A5CM04"/>
<dbReference type="KEGG" id="cmi:CMM_0069"/>
<dbReference type="eggNOG" id="COG3004">
    <property type="taxonomic scope" value="Bacteria"/>
</dbReference>
<dbReference type="HOGENOM" id="CLU_015803_0_0_11"/>
<dbReference type="OrthoDB" id="9808135at2"/>
<dbReference type="Proteomes" id="UP000001564">
    <property type="component" value="Chromosome"/>
</dbReference>
<dbReference type="GO" id="GO:0005886">
    <property type="term" value="C:plasma membrane"/>
    <property type="evidence" value="ECO:0007669"/>
    <property type="project" value="UniProtKB-SubCell"/>
</dbReference>
<dbReference type="GO" id="GO:0015385">
    <property type="term" value="F:sodium:proton antiporter activity"/>
    <property type="evidence" value="ECO:0007669"/>
    <property type="project" value="TreeGrafter"/>
</dbReference>
<dbReference type="GO" id="GO:0006885">
    <property type="term" value="P:regulation of pH"/>
    <property type="evidence" value="ECO:0007669"/>
    <property type="project" value="InterPro"/>
</dbReference>
<dbReference type="Gene3D" id="1.20.1530.10">
    <property type="entry name" value="Na+/H+ antiporter like domain"/>
    <property type="match status" value="1"/>
</dbReference>
<dbReference type="HAMAP" id="MF_01844">
    <property type="entry name" value="NhaA"/>
    <property type="match status" value="1"/>
</dbReference>
<dbReference type="InterPro" id="IPR023171">
    <property type="entry name" value="Na/H_antiporter_dom_sf"/>
</dbReference>
<dbReference type="InterPro" id="IPR004670">
    <property type="entry name" value="NhaA"/>
</dbReference>
<dbReference type="NCBIfam" id="TIGR00773">
    <property type="entry name" value="NhaA"/>
    <property type="match status" value="1"/>
</dbReference>
<dbReference type="PANTHER" id="PTHR30341:SF0">
    <property type="entry name" value="NA(+)_H(+) ANTIPORTER NHAA"/>
    <property type="match status" value="1"/>
</dbReference>
<dbReference type="PANTHER" id="PTHR30341">
    <property type="entry name" value="SODIUM ION/PROTON ANTIPORTER NHAA-RELATED"/>
    <property type="match status" value="1"/>
</dbReference>
<dbReference type="Pfam" id="PF06965">
    <property type="entry name" value="Na_H_antiport_1"/>
    <property type="match status" value="1"/>
</dbReference>
<protein>
    <recommendedName>
        <fullName evidence="1">Na(+)/H(+) antiporter NhaA 1</fullName>
    </recommendedName>
    <alternativeName>
        <fullName evidence="1">Sodium/proton antiporter NhaA 1</fullName>
    </alternativeName>
</protein>
<evidence type="ECO:0000255" key="1">
    <source>
        <dbReference type="HAMAP-Rule" id="MF_01844"/>
    </source>
</evidence>
<evidence type="ECO:0000256" key="2">
    <source>
        <dbReference type="SAM" id="MobiDB-lite"/>
    </source>
</evidence>
<keyword id="KW-0050">Antiport</keyword>
<keyword id="KW-1003">Cell membrane</keyword>
<keyword id="KW-0406">Ion transport</keyword>
<keyword id="KW-0472">Membrane</keyword>
<keyword id="KW-0915">Sodium</keyword>
<keyword id="KW-0739">Sodium transport</keyword>
<keyword id="KW-0812">Transmembrane</keyword>
<keyword id="KW-1133">Transmembrane helix</keyword>
<keyword id="KW-0813">Transport</keyword>
<organism>
    <name type="scientific">Clavibacter michiganensis subsp. michiganensis (strain NCPPB 382)</name>
    <dbReference type="NCBI Taxonomy" id="443906"/>
    <lineage>
        <taxon>Bacteria</taxon>
        <taxon>Bacillati</taxon>
        <taxon>Actinomycetota</taxon>
        <taxon>Actinomycetes</taxon>
        <taxon>Micrococcales</taxon>
        <taxon>Microbacteriaceae</taxon>
        <taxon>Clavibacter</taxon>
    </lineage>
</organism>
<comment type="function">
    <text evidence="1">Na(+)/H(+) antiporter that extrudes sodium in exchange for external protons.</text>
</comment>
<comment type="catalytic activity">
    <reaction evidence="1">
        <text>Na(+)(in) + 2 H(+)(out) = Na(+)(out) + 2 H(+)(in)</text>
        <dbReference type="Rhea" id="RHEA:29251"/>
        <dbReference type="ChEBI" id="CHEBI:15378"/>
        <dbReference type="ChEBI" id="CHEBI:29101"/>
    </reaction>
    <physiologicalReaction direction="left-to-right" evidence="1">
        <dbReference type="Rhea" id="RHEA:29252"/>
    </physiologicalReaction>
</comment>
<comment type="subcellular location">
    <subcellularLocation>
        <location evidence="1">Cell membrane</location>
        <topology evidence="1">Multi-pass membrane protein</topology>
    </subcellularLocation>
</comment>
<comment type="similarity">
    <text evidence="1">Belongs to the NhaA Na(+)/H(+) (TC 2.A.33) antiporter family.</text>
</comment>